<feature type="chain" id="PRO_0000140287" description="Peptide methionine sulfoxide reductase MsrB">
    <location>
        <begin position="1"/>
        <end position="131"/>
    </location>
</feature>
<feature type="domain" description="MsrB" evidence="2">
    <location>
        <begin position="8"/>
        <end position="130"/>
    </location>
</feature>
<feature type="active site" description="Nucleophile" evidence="2">
    <location>
        <position position="119"/>
    </location>
</feature>
<feature type="binding site" evidence="2">
    <location>
        <position position="47"/>
    </location>
    <ligand>
        <name>Zn(2+)</name>
        <dbReference type="ChEBI" id="CHEBI:29105"/>
    </ligand>
</feature>
<feature type="binding site" evidence="2">
    <location>
        <position position="50"/>
    </location>
    <ligand>
        <name>Zn(2+)</name>
        <dbReference type="ChEBI" id="CHEBI:29105"/>
    </ligand>
</feature>
<feature type="binding site" evidence="2">
    <location>
        <position position="96"/>
    </location>
    <ligand>
        <name>Zn(2+)</name>
        <dbReference type="ChEBI" id="CHEBI:29105"/>
    </ligand>
</feature>
<feature type="binding site" evidence="2">
    <location>
        <position position="99"/>
    </location>
    <ligand>
        <name>Zn(2+)</name>
        <dbReference type="ChEBI" id="CHEBI:29105"/>
    </ligand>
</feature>
<comment type="catalytic activity">
    <reaction evidence="1">
        <text>L-methionyl-[protein] + [thioredoxin]-disulfide + H2O = L-methionyl-(R)-S-oxide-[protein] + [thioredoxin]-dithiol</text>
        <dbReference type="Rhea" id="RHEA:24164"/>
        <dbReference type="Rhea" id="RHEA-COMP:10698"/>
        <dbReference type="Rhea" id="RHEA-COMP:10700"/>
        <dbReference type="Rhea" id="RHEA-COMP:12313"/>
        <dbReference type="Rhea" id="RHEA-COMP:12314"/>
        <dbReference type="ChEBI" id="CHEBI:15377"/>
        <dbReference type="ChEBI" id="CHEBI:16044"/>
        <dbReference type="ChEBI" id="CHEBI:29950"/>
        <dbReference type="ChEBI" id="CHEBI:45764"/>
        <dbReference type="ChEBI" id="CHEBI:50058"/>
        <dbReference type="EC" id="1.8.4.12"/>
    </reaction>
</comment>
<comment type="cofactor">
    <cofactor evidence="1">
        <name>Zn(2+)</name>
        <dbReference type="ChEBI" id="CHEBI:29105"/>
    </cofactor>
    <text evidence="1">Binds 1 zinc ion per subunit. The zinc ion is important for the structural integrity of the protein.</text>
</comment>
<comment type="similarity">
    <text evidence="1">Belongs to the MsrB Met sulfoxide reductase family.</text>
</comment>
<proteinExistence type="inferred from homology"/>
<protein>
    <recommendedName>
        <fullName evidence="1">Peptide methionine sulfoxide reductase MsrB</fullName>
        <ecNumber evidence="1">1.8.4.12</ecNumber>
    </recommendedName>
    <alternativeName>
        <fullName evidence="1">Peptide-methionine (R)-S-oxide reductase</fullName>
    </alternativeName>
</protein>
<dbReference type="EC" id="1.8.4.12" evidence="1"/>
<dbReference type="EMBL" id="AE015451">
    <property type="protein sequence ID" value="AAN67492.1"/>
    <property type="molecule type" value="Genomic_DNA"/>
</dbReference>
<dbReference type="RefSeq" id="NP_744028.1">
    <property type="nucleotide sequence ID" value="NC_002947.4"/>
</dbReference>
<dbReference type="RefSeq" id="WP_010952901.1">
    <property type="nucleotide sequence ID" value="NZ_CP169744.1"/>
</dbReference>
<dbReference type="SMR" id="Q88LQ6"/>
<dbReference type="STRING" id="160488.PP_1873"/>
<dbReference type="PaxDb" id="160488-PP_1873"/>
<dbReference type="GeneID" id="83681589"/>
<dbReference type="KEGG" id="ppu:PP_1873"/>
<dbReference type="PATRIC" id="fig|160488.4.peg.1976"/>
<dbReference type="eggNOG" id="COG0229">
    <property type="taxonomic scope" value="Bacteria"/>
</dbReference>
<dbReference type="HOGENOM" id="CLU_031040_8_5_6"/>
<dbReference type="OrthoDB" id="9785497at2"/>
<dbReference type="PhylomeDB" id="Q88LQ6"/>
<dbReference type="BioCyc" id="PPUT160488:G1G01-1977-MONOMER"/>
<dbReference type="Proteomes" id="UP000000556">
    <property type="component" value="Chromosome"/>
</dbReference>
<dbReference type="GO" id="GO:0005737">
    <property type="term" value="C:cytoplasm"/>
    <property type="evidence" value="ECO:0007669"/>
    <property type="project" value="TreeGrafter"/>
</dbReference>
<dbReference type="GO" id="GO:0033743">
    <property type="term" value="F:peptide-methionine (R)-S-oxide reductase activity"/>
    <property type="evidence" value="ECO:0007669"/>
    <property type="project" value="UniProtKB-UniRule"/>
</dbReference>
<dbReference type="GO" id="GO:0008270">
    <property type="term" value="F:zinc ion binding"/>
    <property type="evidence" value="ECO:0007669"/>
    <property type="project" value="UniProtKB-UniRule"/>
</dbReference>
<dbReference type="GO" id="GO:0030091">
    <property type="term" value="P:protein repair"/>
    <property type="evidence" value="ECO:0007669"/>
    <property type="project" value="InterPro"/>
</dbReference>
<dbReference type="GO" id="GO:0006979">
    <property type="term" value="P:response to oxidative stress"/>
    <property type="evidence" value="ECO:0007669"/>
    <property type="project" value="InterPro"/>
</dbReference>
<dbReference type="FunFam" id="2.170.150.20:FF:000001">
    <property type="entry name" value="Peptide methionine sulfoxide reductase MsrB"/>
    <property type="match status" value="1"/>
</dbReference>
<dbReference type="Gene3D" id="2.170.150.20">
    <property type="entry name" value="Peptide methionine sulfoxide reductase"/>
    <property type="match status" value="1"/>
</dbReference>
<dbReference type="HAMAP" id="MF_01400">
    <property type="entry name" value="MsrB"/>
    <property type="match status" value="1"/>
</dbReference>
<dbReference type="InterPro" id="IPR028427">
    <property type="entry name" value="Met_Sox_Rdtase_MsrB"/>
</dbReference>
<dbReference type="InterPro" id="IPR002579">
    <property type="entry name" value="Met_Sox_Rdtase_MsrB_dom"/>
</dbReference>
<dbReference type="InterPro" id="IPR011057">
    <property type="entry name" value="Mss4-like_sf"/>
</dbReference>
<dbReference type="NCBIfam" id="TIGR00357">
    <property type="entry name" value="peptide-methionine (R)-S-oxide reductase MsrB"/>
    <property type="match status" value="1"/>
</dbReference>
<dbReference type="PANTHER" id="PTHR10173">
    <property type="entry name" value="METHIONINE SULFOXIDE REDUCTASE"/>
    <property type="match status" value="1"/>
</dbReference>
<dbReference type="PANTHER" id="PTHR10173:SF52">
    <property type="entry name" value="METHIONINE-R-SULFOXIDE REDUCTASE B1"/>
    <property type="match status" value="1"/>
</dbReference>
<dbReference type="Pfam" id="PF01641">
    <property type="entry name" value="SelR"/>
    <property type="match status" value="1"/>
</dbReference>
<dbReference type="SUPFAM" id="SSF51316">
    <property type="entry name" value="Mss4-like"/>
    <property type="match status" value="1"/>
</dbReference>
<dbReference type="PROSITE" id="PS51790">
    <property type="entry name" value="MSRB"/>
    <property type="match status" value="1"/>
</dbReference>
<accession>Q88LQ6</accession>
<organism>
    <name type="scientific">Pseudomonas putida (strain ATCC 47054 / DSM 6125 / CFBP 8728 / NCIMB 11950 / KT2440)</name>
    <dbReference type="NCBI Taxonomy" id="160488"/>
    <lineage>
        <taxon>Bacteria</taxon>
        <taxon>Pseudomonadati</taxon>
        <taxon>Pseudomonadota</taxon>
        <taxon>Gammaproteobacteria</taxon>
        <taxon>Pseudomonadales</taxon>
        <taxon>Pseudomonadaceae</taxon>
        <taxon>Pseudomonas</taxon>
    </lineage>
</organism>
<name>MSRB_PSEPK</name>
<sequence length="131" mass="14948">MKKIEKTLDEWRSMLDPEQYQVCRLKGTERPFSGKYNSERRDGIYHCICCGLPLFDAQTKFDAGCGWPSFYAPIEDSAMIEIRDTSHGMIRTEVTCARCDAHLGHVFPDGPPPTGLRYCINSVCIDLRPRD</sequence>
<reference key="1">
    <citation type="journal article" date="2002" name="Environ. Microbiol.">
        <title>Complete genome sequence and comparative analysis of the metabolically versatile Pseudomonas putida KT2440.</title>
        <authorList>
            <person name="Nelson K.E."/>
            <person name="Weinel C."/>
            <person name="Paulsen I.T."/>
            <person name="Dodson R.J."/>
            <person name="Hilbert H."/>
            <person name="Martins dos Santos V.A.P."/>
            <person name="Fouts D.E."/>
            <person name="Gill S.R."/>
            <person name="Pop M."/>
            <person name="Holmes M."/>
            <person name="Brinkac L.M."/>
            <person name="Beanan M.J."/>
            <person name="DeBoy R.T."/>
            <person name="Daugherty S.C."/>
            <person name="Kolonay J.F."/>
            <person name="Madupu R."/>
            <person name="Nelson W.C."/>
            <person name="White O."/>
            <person name="Peterson J.D."/>
            <person name="Khouri H.M."/>
            <person name="Hance I."/>
            <person name="Chris Lee P."/>
            <person name="Holtzapple E.K."/>
            <person name="Scanlan D."/>
            <person name="Tran K."/>
            <person name="Moazzez A."/>
            <person name="Utterback T.R."/>
            <person name="Rizzo M."/>
            <person name="Lee K."/>
            <person name="Kosack D."/>
            <person name="Moestl D."/>
            <person name="Wedler H."/>
            <person name="Lauber J."/>
            <person name="Stjepandic D."/>
            <person name="Hoheisel J."/>
            <person name="Straetz M."/>
            <person name="Heim S."/>
            <person name="Kiewitz C."/>
            <person name="Eisen J.A."/>
            <person name="Timmis K.N."/>
            <person name="Duesterhoeft A."/>
            <person name="Tuemmler B."/>
            <person name="Fraser C.M."/>
        </authorList>
    </citation>
    <scope>NUCLEOTIDE SEQUENCE [LARGE SCALE GENOMIC DNA]</scope>
    <source>
        <strain>ATCC 47054 / DSM 6125 / CFBP 8728 / NCIMB 11950 / KT2440</strain>
    </source>
</reference>
<gene>
    <name evidence="1" type="primary">msrB</name>
    <name type="ordered locus">PP_1873</name>
</gene>
<evidence type="ECO:0000255" key="1">
    <source>
        <dbReference type="HAMAP-Rule" id="MF_01400"/>
    </source>
</evidence>
<evidence type="ECO:0000255" key="2">
    <source>
        <dbReference type="PROSITE-ProRule" id="PRU01126"/>
    </source>
</evidence>
<keyword id="KW-0479">Metal-binding</keyword>
<keyword id="KW-0560">Oxidoreductase</keyword>
<keyword id="KW-1185">Reference proteome</keyword>
<keyword id="KW-0862">Zinc</keyword>